<evidence type="ECO:0000250" key="1"/>
<evidence type="ECO:0000250" key="2">
    <source>
        <dbReference type="UniProtKB" id="P00747"/>
    </source>
</evidence>
<evidence type="ECO:0000255" key="3"/>
<evidence type="ECO:0000255" key="4">
    <source>
        <dbReference type="PROSITE-ProRule" id="PRU00121"/>
    </source>
</evidence>
<evidence type="ECO:0000255" key="5">
    <source>
        <dbReference type="PROSITE-ProRule" id="PRU00274"/>
    </source>
</evidence>
<evidence type="ECO:0000255" key="6">
    <source>
        <dbReference type="PROSITE-ProRule" id="PRU00315"/>
    </source>
</evidence>
<dbReference type="EC" id="3.4.21.7"/>
<dbReference type="EMBL" id="AF012297">
    <property type="protein sequence ID" value="AAB65760.1"/>
    <property type="molecule type" value="mRNA"/>
</dbReference>
<dbReference type="SMR" id="O18783"/>
<dbReference type="MEROPS" id="S01.233"/>
<dbReference type="GO" id="GO:0005615">
    <property type="term" value="C:extracellular space"/>
    <property type="evidence" value="ECO:0007669"/>
    <property type="project" value="TreeGrafter"/>
</dbReference>
<dbReference type="GO" id="GO:0004252">
    <property type="term" value="F:serine-type endopeptidase activity"/>
    <property type="evidence" value="ECO:0007669"/>
    <property type="project" value="UniProtKB-EC"/>
</dbReference>
<dbReference type="GO" id="GO:0005102">
    <property type="term" value="F:signaling receptor binding"/>
    <property type="evidence" value="ECO:0007669"/>
    <property type="project" value="TreeGrafter"/>
</dbReference>
<dbReference type="GO" id="GO:0007596">
    <property type="term" value="P:blood coagulation"/>
    <property type="evidence" value="ECO:0007669"/>
    <property type="project" value="UniProtKB-KW"/>
</dbReference>
<dbReference type="GO" id="GO:0042730">
    <property type="term" value="P:fibrinolysis"/>
    <property type="evidence" value="ECO:0007669"/>
    <property type="project" value="UniProtKB-KW"/>
</dbReference>
<dbReference type="GO" id="GO:0006508">
    <property type="term" value="P:proteolysis"/>
    <property type="evidence" value="ECO:0007669"/>
    <property type="project" value="UniProtKB-KW"/>
</dbReference>
<dbReference type="GO" id="GO:0048771">
    <property type="term" value="P:tissue remodeling"/>
    <property type="evidence" value="ECO:0007669"/>
    <property type="project" value="UniProtKB-KW"/>
</dbReference>
<dbReference type="CDD" id="cd00108">
    <property type="entry name" value="KR"/>
    <property type="match status" value="5"/>
</dbReference>
<dbReference type="CDD" id="cd01099">
    <property type="entry name" value="PAN_AP_HGF"/>
    <property type="match status" value="1"/>
</dbReference>
<dbReference type="CDD" id="cd00190">
    <property type="entry name" value="Tryp_SPc"/>
    <property type="match status" value="1"/>
</dbReference>
<dbReference type="FunFam" id="2.40.20.10:FF:000002">
    <property type="entry name" value="Hepatocyte growth factor"/>
    <property type="match status" value="1"/>
</dbReference>
<dbReference type="FunFam" id="2.40.20.10:FF:000004">
    <property type="entry name" value="Hepatocyte growth factor"/>
    <property type="match status" value="1"/>
</dbReference>
<dbReference type="FunFam" id="2.40.20.10:FF:000005">
    <property type="entry name" value="Plasminogen"/>
    <property type="match status" value="1"/>
</dbReference>
<dbReference type="FunFam" id="2.40.20.10:FF:000011">
    <property type="entry name" value="Plasminogen"/>
    <property type="match status" value="1"/>
</dbReference>
<dbReference type="FunFam" id="2.40.20.10:FF:000014">
    <property type="entry name" value="Plasminogen"/>
    <property type="match status" value="1"/>
</dbReference>
<dbReference type="FunFam" id="3.50.4.10:FF:000027">
    <property type="entry name" value="Plasminogen"/>
    <property type="match status" value="1"/>
</dbReference>
<dbReference type="FunFam" id="2.40.10.10:FF:000003">
    <property type="entry name" value="Transmembrane serine protease 3"/>
    <property type="match status" value="1"/>
</dbReference>
<dbReference type="Gene3D" id="3.50.4.10">
    <property type="entry name" value="Hepatocyte Growth Factor"/>
    <property type="match status" value="1"/>
</dbReference>
<dbReference type="Gene3D" id="2.40.20.10">
    <property type="entry name" value="Plasminogen Kringle 4"/>
    <property type="match status" value="5"/>
</dbReference>
<dbReference type="Gene3D" id="2.40.10.10">
    <property type="entry name" value="Trypsin-like serine proteases"/>
    <property type="match status" value="1"/>
</dbReference>
<dbReference type="InterPro" id="IPR000001">
    <property type="entry name" value="Kringle"/>
</dbReference>
<dbReference type="InterPro" id="IPR013806">
    <property type="entry name" value="Kringle-like"/>
</dbReference>
<dbReference type="InterPro" id="IPR018056">
    <property type="entry name" value="Kringle_CS"/>
</dbReference>
<dbReference type="InterPro" id="IPR038178">
    <property type="entry name" value="Kringle_sf"/>
</dbReference>
<dbReference type="InterPro" id="IPR003609">
    <property type="entry name" value="Pan_app"/>
</dbReference>
<dbReference type="InterPro" id="IPR023317">
    <property type="entry name" value="Pept_S1A_plasmin"/>
</dbReference>
<dbReference type="InterPro" id="IPR009003">
    <property type="entry name" value="Peptidase_S1_PA"/>
</dbReference>
<dbReference type="InterPro" id="IPR043504">
    <property type="entry name" value="Peptidase_S1_PA_chymotrypsin"/>
</dbReference>
<dbReference type="InterPro" id="IPR001314">
    <property type="entry name" value="Peptidase_S1A"/>
</dbReference>
<dbReference type="InterPro" id="IPR050759">
    <property type="entry name" value="Serine_protease_kringle"/>
</dbReference>
<dbReference type="InterPro" id="IPR001254">
    <property type="entry name" value="Trypsin_dom"/>
</dbReference>
<dbReference type="InterPro" id="IPR018114">
    <property type="entry name" value="TRYPSIN_HIS"/>
</dbReference>
<dbReference type="InterPro" id="IPR033116">
    <property type="entry name" value="TRYPSIN_SER"/>
</dbReference>
<dbReference type="PANTHER" id="PTHR24261:SF13">
    <property type="entry name" value="PLASMINOGEN"/>
    <property type="match status" value="1"/>
</dbReference>
<dbReference type="PANTHER" id="PTHR24261">
    <property type="entry name" value="PLASMINOGEN-RELATED"/>
    <property type="match status" value="1"/>
</dbReference>
<dbReference type="Pfam" id="PF00051">
    <property type="entry name" value="Kringle"/>
    <property type="match status" value="5"/>
</dbReference>
<dbReference type="Pfam" id="PF00024">
    <property type="entry name" value="PAN_1"/>
    <property type="match status" value="1"/>
</dbReference>
<dbReference type="Pfam" id="PF00089">
    <property type="entry name" value="Trypsin"/>
    <property type="match status" value="1"/>
</dbReference>
<dbReference type="PIRSF" id="PIRSF001150">
    <property type="entry name" value="Plasmin"/>
    <property type="match status" value="1"/>
</dbReference>
<dbReference type="PRINTS" id="PR00722">
    <property type="entry name" value="CHYMOTRYPSIN"/>
</dbReference>
<dbReference type="PRINTS" id="PR00018">
    <property type="entry name" value="KRINGLE"/>
</dbReference>
<dbReference type="SMART" id="SM00130">
    <property type="entry name" value="KR"/>
    <property type="match status" value="5"/>
</dbReference>
<dbReference type="SMART" id="SM00473">
    <property type="entry name" value="PAN_AP"/>
    <property type="match status" value="1"/>
</dbReference>
<dbReference type="SMART" id="SM00020">
    <property type="entry name" value="Tryp_SPc"/>
    <property type="match status" value="1"/>
</dbReference>
<dbReference type="SUPFAM" id="SSF57414">
    <property type="entry name" value="Hairpin loop containing domain-like"/>
    <property type="match status" value="1"/>
</dbReference>
<dbReference type="SUPFAM" id="SSF57440">
    <property type="entry name" value="Kringle-like"/>
    <property type="match status" value="5"/>
</dbReference>
<dbReference type="SUPFAM" id="SSF50494">
    <property type="entry name" value="Trypsin-like serine proteases"/>
    <property type="match status" value="1"/>
</dbReference>
<dbReference type="PROSITE" id="PS00021">
    <property type="entry name" value="KRINGLE_1"/>
    <property type="match status" value="5"/>
</dbReference>
<dbReference type="PROSITE" id="PS50070">
    <property type="entry name" value="KRINGLE_2"/>
    <property type="match status" value="5"/>
</dbReference>
<dbReference type="PROSITE" id="PS50948">
    <property type="entry name" value="PAN"/>
    <property type="match status" value="1"/>
</dbReference>
<dbReference type="PROSITE" id="PS50240">
    <property type="entry name" value="TRYPSIN_DOM"/>
    <property type="match status" value="1"/>
</dbReference>
<dbReference type="PROSITE" id="PS00134">
    <property type="entry name" value="TRYPSIN_HIS"/>
    <property type="match status" value="1"/>
</dbReference>
<dbReference type="PROSITE" id="PS00135">
    <property type="entry name" value="TRYPSIN_SER"/>
    <property type="match status" value="1"/>
</dbReference>
<comment type="function">
    <text evidence="1">Plasmin dissolves the fibrin of blood clots and acts as a proteolytic factor in a variety of other processes including embryonic development, tissue remodeling, tumor invasion, and inflammation. In ovulation, weakens the walls of the Graafian follicle. It activates the urokinase-type plasminogen activator, collagenases and several complement zymogens, such as C1, C4 and C5. Cleavage of fibronectin and laminin leads to cell detachment and apoptosis. Also cleaves fibrin, thrombospondin and von Willebrand factor. Its role in tissue remodeling and tumor invasion may be modulated by CSPG4. Binds to cells (By similarity).</text>
</comment>
<comment type="catalytic activity">
    <reaction>
        <text>Preferential cleavage: Lys-|-Xaa &gt; Arg-|-Xaa, higher selectivity than trypsin. Converts fibrin into soluble products.</text>
        <dbReference type="EC" id="3.4.21.7"/>
    </reaction>
</comment>
<comment type="activity regulation">
    <text evidence="1">Converted into plasmin by plasminogen activators, both plasminogen and its activator being bound to fibrin. Activated with catalytic amounts of streptokinase (By similarity).</text>
</comment>
<comment type="subunit">
    <text evidence="2">Interacts with CSPG4 and AMOT. Interacts (via the Kringle domains) with HRG; the interaction tethers PLG to the cell surface and enhances its activation. Interacts (via Kringle 4 domain) with ADA; the interaction stimulates PLG activation when in complex with DPP4. Angiostatin: Interacts with ATP5F1A; the interaction inhibits most of the angiogenic effects of angiostatin.</text>
</comment>
<comment type="subcellular location">
    <subcellularLocation>
        <location evidence="1">Secreted</location>
    </subcellularLocation>
    <text evidence="1">Locates to the cell surface where it is proteolytically cleaved to produce the active plasmin. Interaction with HRG tethers it to the cell surface (By similarity).</text>
</comment>
<comment type="domain">
    <text evidence="1">Kringle domains mediate interaction with CSPG4.</text>
</comment>
<comment type="PTM">
    <text evidence="1">In the presence of the inhibitor, the activation involves only cleavage after Arg-576, yielding two chains held together by two disulfide bonds. In the absence of the inhibitor, the activation involves additionally the removal of the activation peptide (By similarity).</text>
</comment>
<comment type="miscellaneous">
    <text evidence="1">Plasmin is inactivated by alpha-2-antiplasmin immediately after dissociation from the clot.</text>
</comment>
<comment type="miscellaneous">
    <text evidence="1">In the presence of the inhibitor, the activation involves only cleavage after Arg-576, resulting in 2 chains held together by 2 disulfide bonds. Without the inhibitor, the activation also involves removal of the activation peptide (By similarity).</text>
</comment>
<comment type="similarity">
    <text evidence="5">Belongs to the peptidase S1 family. Plasminogen subfamily.</text>
</comment>
<gene>
    <name type="primary">PLG</name>
</gene>
<name>PLMN_NOTEU</name>
<proteinExistence type="evidence at transcript level"/>
<accession>O18783</accession>
<sequence length="806" mass="90981">MEYGKVIFLFLLFLKSGQGESLENYIKTEGASLSNSQKKQFVASSTEECEALCEKETEFVCRSFEHYNKEQKCVIMSENSKTSSVERKRDVVLFEKRIYLSDCKSGNGRNYRGTLSKTKSGITCQKWSDLSPHVPNYAPSKYPDAGLEKNYCRNPDDDVKGPWCYTTNPDIRYEYCDVPECEDECMHCSGENYRGTISKTESGIECQPWDSQEPHSHEYIPSKFPSKDLKENYCRNPDGEPRPWCFTSNPEKRWEFCNIPRCSSPPPPPGPMLQCLKGRGENYRGKIAVTKSGHTCQRWNKQTPHKHNRTPENFPCRGLDENYCRNPDGELEPWCYTTNPDVRQEYCAIPSCGTSSPHTDRVEQSPVIQECYEGKGENYRGTTSTTISGKKCQAWSSMTPHQHKKTPDNFPNADLIRNYCRNPDGDKSPWCYTMDPTVRWEFCNLEKCSGTGSTVLNAQTTRVPSVDTTSHPESDCMYGSGKDYRGKRSTTVTGTLCQAWTAQEPHRHTIFTPDTYPRAGLEENYCRNPDGDPNGPWCYTTNPKKLFDYCDIPQCVSPSSFDCGKPRVEPQKCPGRIVGGCYAQPHSWPWQISLRTRFGEHFCGGTLIAPQWVLTAAHCLERSQWPGAYKVILGLHREVNPESYSQEIGVSRLFKGPLAADIALLKLNRPAAINDKVIPACLPSQDFMVPDRTLCHVTGWGDTQGTSPRGLLKQASLPVIDNRVCNRHEYLNGRVKSTELCAGHLVGRGDSCQGDSGGPLICFEDDKYVLQGVTSWGLGCARPNKPGVYVRVSRYISWIEDVMKNN</sequence>
<reference key="1">
    <citation type="journal article" date="1997" name="Proc. Natl. Acad. Sci. U.S.A.">
        <title>Convergent evolution of apolipoprotein(a) in primates and hedgehog.</title>
        <authorList>
            <person name="Lawn R.M."/>
            <person name="Schwartz K."/>
            <person name="Patthy L."/>
        </authorList>
    </citation>
    <scope>NUCLEOTIDE SEQUENCE [MRNA]</scope>
    <source>
        <tissue>Liver</tissue>
    </source>
</reference>
<protein>
    <recommendedName>
        <fullName>Plasminogen</fullName>
        <ecNumber>3.4.21.7</ecNumber>
    </recommendedName>
    <component>
        <recommendedName>
            <fullName>Plasmin heavy chain A</fullName>
        </recommendedName>
    </component>
    <component>
        <recommendedName>
            <fullName>Activation peptide</fullName>
        </recommendedName>
    </component>
    <component>
        <recommendedName>
            <fullName>Plasmin heavy chain A, short form</fullName>
        </recommendedName>
    </component>
    <component>
        <recommendedName>
            <fullName>Plasmin light chain B</fullName>
        </recommendedName>
    </component>
</protein>
<keyword id="KW-0094">Blood coagulation</keyword>
<keyword id="KW-1015">Disulfide bond</keyword>
<keyword id="KW-0280">Fibrinolysis</keyword>
<keyword id="KW-0356">Hemostasis</keyword>
<keyword id="KW-0378">Hydrolase</keyword>
<keyword id="KW-0420">Kringle</keyword>
<keyword id="KW-0597">Phosphoprotein</keyword>
<keyword id="KW-0645">Protease</keyword>
<keyword id="KW-0677">Repeat</keyword>
<keyword id="KW-0964">Secreted</keyword>
<keyword id="KW-0720">Serine protease</keyword>
<keyword id="KW-0732">Signal</keyword>
<keyword id="KW-0797">Tissue remodeling</keyword>
<keyword id="KW-0865">Zymogen</keyword>
<organism>
    <name type="scientific">Notamacropus eugenii</name>
    <name type="common">Tammar wallaby</name>
    <name type="synonym">Macropus eugenii</name>
    <dbReference type="NCBI Taxonomy" id="9315"/>
    <lineage>
        <taxon>Eukaryota</taxon>
        <taxon>Metazoa</taxon>
        <taxon>Chordata</taxon>
        <taxon>Craniata</taxon>
        <taxon>Vertebrata</taxon>
        <taxon>Euteleostomi</taxon>
        <taxon>Mammalia</taxon>
        <taxon>Metatheria</taxon>
        <taxon>Diprotodontia</taxon>
        <taxon>Macropodidae</taxon>
        <taxon>Notamacropus</taxon>
    </lineage>
</organism>
<feature type="signal peptide" evidence="3">
    <location>
        <begin position="1"/>
        <end position="19"/>
    </location>
</feature>
<feature type="chain" id="PRO_0000028064" description="Plasminogen">
    <location>
        <begin position="20"/>
        <end position="806"/>
    </location>
</feature>
<feature type="chain" id="PRO_0000028065" description="Plasmin heavy chain A" evidence="1">
    <location>
        <begin position="20"/>
        <end position="576"/>
    </location>
</feature>
<feature type="peptide" id="PRO_0000028066" description="Activation peptide" evidence="1">
    <location>
        <begin position="20"/>
        <end position="96"/>
    </location>
</feature>
<feature type="chain" id="PRO_0000028067" description="Plasmin heavy chain A, short form" evidence="1">
    <location>
        <begin position="97"/>
        <end position="576"/>
    </location>
</feature>
<feature type="chain" id="PRO_0000028068" description="Plasmin light chain B" evidence="1">
    <location>
        <begin position="577"/>
        <end position="806"/>
    </location>
</feature>
<feature type="domain" description="PAN" evidence="6">
    <location>
        <begin position="20"/>
        <end position="98"/>
    </location>
</feature>
<feature type="domain" description="Kringle 1" evidence="4">
    <location>
        <begin position="102"/>
        <end position="181"/>
    </location>
</feature>
<feature type="domain" description="Kringle 2" evidence="4">
    <location>
        <begin position="184"/>
        <end position="262"/>
    </location>
</feature>
<feature type="domain" description="Kringle 3" evidence="4">
    <location>
        <begin position="274"/>
        <end position="352"/>
    </location>
</feature>
<feature type="domain" description="Kringle 4" evidence="4">
    <location>
        <begin position="370"/>
        <end position="448"/>
    </location>
</feature>
<feature type="domain" description="Kringle 5" evidence="4">
    <location>
        <begin position="475"/>
        <end position="555"/>
    </location>
</feature>
<feature type="domain" description="Peptidase S1" evidence="5">
    <location>
        <begin position="577"/>
        <end position="804"/>
    </location>
</feature>
<feature type="active site" description="Charge relay system" evidence="1">
    <location>
        <position position="618"/>
    </location>
</feature>
<feature type="active site" description="Charge relay system" evidence="1">
    <location>
        <position position="661"/>
    </location>
</feature>
<feature type="active site" description="Charge relay system" evidence="1">
    <location>
        <position position="756"/>
    </location>
</feature>
<feature type="modified residue" description="Phosphoserine" evidence="2">
    <location>
        <position position="593"/>
    </location>
</feature>
<feature type="modified residue" description="Phosphoserine" evidence="2">
    <location>
        <position position="684"/>
    </location>
</feature>
<feature type="disulfide bond" evidence="1">
    <location>
        <begin position="49"/>
        <end position="73"/>
    </location>
</feature>
<feature type="disulfide bond" evidence="1">
    <location>
        <begin position="53"/>
        <end position="61"/>
    </location>
</feature>
<feature type="disulfide bond" evidence="1">
    <location>
        <begin position="103"/>
        <end position="181"/>
    </location>
</feature>
<feature type="disulfide bond" evidence="1">
    <location>
        <begin position="124"/>
        <end position="164"/>
    </location>
</feature>
<feature type="disulfide bond" evidence="1">
    <location>
        <begin position="152"/>
        <end position="176"/>
    </location>
</feature>
<feature type="disulfide bond" evidence="1">
    <location>
        <begin position="185"/>
        <end position="262"/>
    </location>
</feature>
<feature type="disulfide bond" evidence="1">
    <location>
        <begin position="188"/>
        <end position="316"/>
    </location>
</feature>
<feature type="disulfide bond" evidence="1">
    <location>
        <begin position="206"/>
        <end position="245"/>
    </location>
</feature>
<feature type="disulfide bond" evidence="1">
    <location>
        <begin position="234"/>
        <end position="257"/>
    </location>
</feature>
<feature type="disulfide bond" evidence="1">
    <location>
        <begin position="275"/>
        <end position="352"/>
    </location>
</feature>
<feature type="disulfide bond" evidence="1">
    <location>
        <begin position="296"/>
        <end position="335"/>
    </location>
</feature>
<feature type="disulfide bond" evidence="1">
    <location>
        <begin position="324"/>
        <end position="347"/>
    </location>
</feature>
<feature type="disulfide bond" evidence="1">
    <location>
        <begin position="371"/>
        <end position="448"/>
    </location>
</feature>
<feature type="disulfide bond" evidence="1">
    <location>
        <begin position="392"/>
        <end position="431"/>
    </location>
</feature>
<feature type="disulfide bond" evidence="1">
    <location>
        <begin position="420"/>
        <end position="443"/>
    </location>
</feature>
<feature type="disulfide bond" evidence="1">
    <location>
        <begin position="476"/>
        <end position="555"/>
    </location>
</feature>
<feature type="disulfide bond" evidence="1">
    <location>
        <begin position="497"/>
        <end position="538"/>
    </location>
</feature>
<feature type="disulfide bond" evidence="1">
    <location>
        <begin position="526"/>
        <end position="550"/>
    </location>
</feature>
<feature type="disulfide bond" description="Interchain (between A and B chains)" evidence="1">
    <location>
        <begin position="563"/>
        <end position="681"/>
    </location>
</feature>
<feature type="disulfide bond" description="Interchain (between A and B chains)" evidence="1">
    <location>
        <begin position="573"/>
        <end position="581"/>
    </location>
</feature>
<feature type="disulfide bond" evidence="1">
    <location>
        <begin position="603"/>
        <end position="619"/>
    </location>
</feature>
<feature type="disulfide bond" evidence="1">
    <location>
        <begin position="695"/>
        <end position="762"/>
    </location>
</feature>
<feature type="disulfide bond" evidence="1">
    <location>
        <begin position="725"/>
        <end position="741"/>
    </location>
</feature>
<feature type="disulfide bond" evidence="1">
    <location>
        <begin position="752"/>
        <end position="780"/>
    </location>
</feature>